<feature type="chain" id="PRO_0000435348" description="Lipoate--protein ligase">
    <location>
        <begin position="1"/>
        <end position="339"/>
    </location>
</feature>
<feature type="domain" description="BPL/LPL catalytic" evidence="2">
    <location>
        <begin position="31"/>
        <end position="221"/>
    </location>
</feature>
<feature type="binding site" evidence="1">
    <location>
        <position position="73"/>
    </location>
    <ligand>
        <name>ATP</name>
        <dbReference type="ChEBI" id="CHEBI:30616"/>
    </ligand>
</feature>
<feature type="binding site" evidence="1">
    <location>
        <begin position="78"/>
        <end position="81"/>
    </location>
    <ligand>
        <name>ATP</name>
        <dbReference type="ChEBI" id="CHEBI:30616"/>
    </ligand>
</feature>
<feature type="binding site" evidence="1">
    <location>
        <position position="135"/>
    </location>
    <ligand>
        <name>(R)-lipoate</name>
        <dbReference type="ChEBI" id="CHEBI:83088"/>
    </ligand>
</feature>
<feature type="binding site" evidence="1">
    <location>
        <position position="135"/>
    </location>
    <ligand>
        <name>ATP</name>
        <dbReference type="ChEBI" id="CHEBI:30616"/>
    </ligand>
</feature>
<feature type="binding site" evidence="1">
    <location>
        <position position="139"/>
    </location>
    <ligand>
        <name>ATP</name>
        <dbReference type="ChEBI" id="CHEBI:30616"/>
    </ligand>
</feature>
<feature type="mutagenesis site" description="Reduces enzymatic activity." evidence="3">
    <original>D</original>
    <variation>A</variation>
    <location>
        <position position="128"/>
    </location>
</feature>
<feature type="mutagenesis site" description="Reduces enzymatic activity." evidence="3">
    <original>K</original>
    <variation>R</variation>
    <location>
        <position position="134"/>
    </location>
</feature>
<keyword id="KW-0067">ATP-binding</keyword>
<keyword id="KW-0436">Ligase</keyword>
<keyword id="KW-0547">Nucleotide-binding</keyword>
<protein>
    <recommendedName>
        <fullName evidence="4">Lipoate--protein ligase</fullName>
        <ecNumber evidence="3">6.3.1.20</ecNumber>
    </recommendedName>
    <alternativeName>
        <fullName evidence="4">LplA2</fullName>
    </alternativeName>
</protein>
<gene>
    <name evidence="7" type="primary">lplA</name>
    <name evidence="7" type="ordered locus">SpyM50870</name>
</gene>
<name>LPLA2_STRPG</name>
<evidence type="ECO:0000250" key="1">
    <source>
        <dbReference type="UniProtKB" id="Q9HKT1"/>
    </source>
</evidence>
<evidence type="ECO:0000255" key="2">
    <source>
        <dbReference type="PROSITE-ProRule" id="PRU01067"/>
    </source>
</evidence>
<evidence type="ECO:0000269" key="3">
    <source>
    </source>
</evidence>
<evidence type="ECO:0000303" key="4">
    <source>
    </source>
</evidence>
<evidence type="ECO:0000305" key="5"/>
<evidence type="ECO:0000305" key="6">
    <source>
    </source>
</evidence>
<evidence type="ECO:0000312" key="7">
    <source>
        <dbReference type="EMBL" id="CAM30198.1"/>
    </source>
</evidence>
<comment type="function">
    <text evidence="3">Catalyzes specifically the lipoylation of GcvH-L (SpyM50867), likely via the ATP-dependent activation of lipoate to lipoyl-AMP and the transfer of the activated lipoyl onto the lipoyl domain of the target protein.</text>
</comment>
<comment type="catalytic activity">
    <reaction evidence="3">
        <text>L-lysyl-[lipoyl-carrier protein] + (R)-lipoate + ATP = N(6)-[(R)-lipoyl]-L-lysyl-[lipoyl-carrier protein] + AMP + diphosphate + H(+)</text>
        <dbReference type="Rhea" id="RHEA:49288"/>
        <dbReference type="Rhea" id="RHEA-COMP:10500"/>
        <dbReference type="Rhea" id="RHEA-COMP:10502"/>
        <dbReference type="ChEBI" id="CHEBI:15378"/>
        <dbReference type="ChEBI" id="CHEBI:29969"/>
        <dbReference type="ChEBI" id="CHEBI:30616"/>
        <dbReference type="ChEBI" id="CHEBI:33019"/>
        <dbReference type="ChEBI" id="CHEBI:83088"/>
        <dbReference type="ChEBI" id="CHEBI:83099"/>
        <dbReference type="ChEBI" id="CHEBI:456215"/>
        <dbReference type="EC" id="6.3.1.20"/>
    </reaction>
</comment>
<comment type="pathway">
    <text evidence="6">Protein modification; protein lipoylation via exogenous pathway; protein N(6)-(lipoyl)lysine from lipoate: step 1/2.</text>
</comment>
<comment type="pathway">
    <text evidence="6">Protein modification; protein lipoylation via exogenous pathway; protein N(6)-(lipoyl)lysine from lipoate: step 2/2.</text>
</comment>
<comment type="similarity">
    <text evidence="5">Belongs to the LplA family.</text>
</comment>
<accession>P0DN72</accession>
<proteinExistence type="evidence at protein level"/>
<dbReference type="EC" id="6.3.1.20" evidence="3"/>
<dbReference type="EMBL" id="AM295007">
    <property type="protein sequence ID" value="CAM30198.1"/>
    <property type="molecule type" value="Genomic_DNA"/>
</dbReference>
<dbReference type="RefSeq" id="WP_011184541.1">
    <property type="nucleotide sequence ID" value="NC_009332.1"/>
</dbReference>
<dbReference type="SMR" id="P0DN72"/>
<dbReference type="KEGG" id="spf:SpyM50870"/>
<dbReference type="HOGENOM" id="CLU_022986_0_2_9"/>
<dbReference type="UniPathway" id="UPA00537">
    <property type="reaction ID" value="UER00594"/>
</dbReference>
<dbReference type="UniPathway" id="UPA00537">
    <property type="reaction ID" value="UER00595"/>
</dbReference>
<dbReference type="GO" id="GO:0005737">
    <property type="term" value="C:cytoplasm"/>
    <property type="evidence" value="ECO:0007669"/>
    <property type="project" value="TreeGrafter"/>
</dbReference>
<dbReference type="GO" id="GO:0005524">
    <property type="term" value="F:ATP binding"/>
    <property type="evidence" value="ECO:0007669"/>
    <property type="project" value="UniProtKB-KW"/>
</dbReference>
<dbReference type="GO" id="GO:0016979">
    <property type="term" value="F:lipoate-protein ligase activity"/>
    <property type="evidence" value="ECO:0000314"/>
    <property type="project" value="UniProtKB"/>
</dbReference>
<dbReference type="GO" id="GO:0017118">
    <property type="term" value="F:lipoyltransferase activity"/>
    <property type="evidence" value="ECO:0007669"/>
    <property type="project" value="TreeGrafter"/>
</dbReference>
<dbReference type="GO" id="GO:0009249">
    <property type="term" value="P:protein lipoylation"/>
    <property type="evidence" value="ECO:0000314"/>
    <property type="project" value="UniProtKB"/>
</dbReference>
<dbReference type="CDD" id="cd16443">
    <property type="entry name" value="LplA"/>
    <property type="match status" value="1"/>
</dbReference>
<dbReference type="FunFam" id="3.30.930.10:FF:000072">
    <property type="entry name" value="Lipoate--protein ligase"/>
    <property type="match status" value="1"/>
</dbReference>
<dbReference type="Gene3D" id="3.30.930.10">
    <property type="entry name" value="Bira Bifunctional Protein, Domain 2"/>
    <property type="match status" value="1"/>
</dbReference>
<dbReference type="Gene3D" id="3.30.390.50">
    <property type="entry name" value="CO dehydrogenase flavoprotein, C-terminal domain"/>
    <property type="match status" value="1"/>
</dbReference>
<dbReference type="InterPro" id="IPR045864">
    <property type="entry name" value="aa-tRNA-synth_II/BPL/LPL"/>
</dbReference>
<dbReference type="InterPro" id="IPR004143">
    <property type="entry name" value="BPL_LPL_catalytic"/>
</dbReference>
<dbReference type="InterPro" id="IPR019491">
    <property type="entry name" value="Lipoate_protein_ligase_C"/>
</dbReference>
<dbReference type="InterPro" id="IPR004562">
    <property type="entry name" value="LipoylTrfase_LipoateP_Ligase"/>
</dbReference>
<dbReference type="NCBIfam" id="TIGR00545">
    <property type="entry name" value="lipoyltrans"/>
    <property type="match status" value="1"/>
</dbReference>
<dbReference type="PANTHER" id="PTHR12561">
    <property type="entry name" value="LIPOATE-PROTEIN LIGASE"/>
    <property type="match status" value="1"/>
</dbReference>
<dbReference type="PANTHER" id="PTHR12561:SF3">
    <property type="entry name" value="LIPOYLTRANSFERASE 1, MITOCHONDRIAL"/>
    <property type="match status" value="1"/>
</dbReference>
<dbReference type="Pfam" id="PF10437">
    <property type="entry name" value="Lip_prot_lig_C"/>
    <property type="match status" value="1"/>
</dbReference>
<dbReference type="Pfam" id="PF21948">
    <property type="entry name" value="LplA-B_cat"/>
    <property type="match status" value="1"/>
</dbReference>
<dbReference type="SUPFAM" id="SSF55681">
    <property type="entry name" value="Class II aaRS and biotin synthetases"/>
    <property type="match status" value="1"/>
</dbReference>
<dbReference type="SUPFAM" id="SSF82649">
    <property type="entry name" value="SufE/NifU"/>
    <property type="match status" value="1"/>
</dbReference>
<dbReference type="PROSITE" id="PS51733">
    <property type="entry name" value="BPL_LPL_CATALYTIC"/>
    <property type="match status" value="1"/>
</dbReference>
<organism>
    <name type="scientific">Streptococcus pyogenes serotype M5 (strain Manfredo)</name>
    <dbReference type="NCBI Taxonomy" id="160491"/>
    <lineage>
        <taxon>Bacteria</taxon>
        <taxon>Bacillati</taxon>
        <taxon>Bacillota</taxon>
        <taxon>Bacilli</taxon>
        <taxon>Lactobacillales</taxon>
        <taxon>Streptococcaceae</taxon>
        <taxon>Streptococcus</taxon>
    </lineage>
</organism>
<sequence length="339" mass="38252">MYLIEPIRNGKRITDGAVALAMQVYVQENLFLDDDILFPYYCDPKVEIGKFQNAVVETNQEYLKEHHIPVVRRDTGGGAVYVDSGAVNICYLINDNGVFGDFKRTYQPAIEALHHLGATGVEMSGRNDLVIDGKKVSGAAMTIANGRVYGGYSLLLDVDFEAMEKALKPNRKKIESKGIRSVRSRVGNIREHLAPQYQGITIEEFKDLMICQLLQIETISQAKRYDLTEKDWQQIDALTERKYHNWEWNYGNAPQYRYHRDGRFTGGTVDIHLDIKKGYIAACRIYGDFFGKADIAELEGHLIGTRMEKEDVLATLNAIDLAPYLGAITAEELGDLIFS</sequence>
<reference key="1">
    <citation type="journal article" date="2007" name="J. Bacteriol.">
        <title>Complete genome of acute rheumatic fever-associated serotype M5 Streptococcus pyogenes strain Manfredo.</title>
        <authorList>
            <person name="Holden M.T.G."/>
            <person name="Scott A."/>
            <person name="Cherevach I."/>
            <person name="Chillingworth T."/>
            <person name="Churcher C."/>
            <person name="Cronin A."/>
            <person name="Dowd L."/>
            <person name="Feltwell T."/>
            <person name="Hamlin N."/>
            <person name="Holroyd S."/>
            <person name="Jagels K."/>
            <person name="Moule S."/>
            <person name="Mungall K."/>
            <person name="Quail M.A."/>
            <person name="Price C."/>
            <person name="Rabbinowitsch E."/>
            <person name="Sharp S."/>
            <person name="Skelton J."/>
            <person name="Whitehead S."/>
            <person name="Barrell B.G."/>
            <person name="Kehoe M."/>
            <person name="Parkhill J."/>
        </authorList>
    </citation>
    <scope>NUCLEOTIDE SEQUENCE [LARGE SCALE GENOMIC DNA]</scope>
    <source>
        <strain>Manfredo</strain>
    </source>
</reference>
<reference key="2">
    <citation type="journal article" date="2015" name="Mol. Cell">
        <title>Identification of a class of protein ADP-ribosylating sirtuins in microbial pathogens.</title>
        <authorList>
            <person name="Rack J.G."/>
            <person name="Morra R."/>
            <person name="Barkauskaite E."/>
            <person name="Kraehenbuehl R."/>
            <person name="Ariza A."/>
            <person name="Qu Y."/>
            <person name="Ortmayer M."/>
            <person name="Leidecker O."/>
            <person name="Cameron D.R."/>
            <person name="Matic I."/>
            <person name="Peleg A.Y."/>
            <person name="Leys D."/>
            <person name="Traven A."/>
            <person name="Ahel I."/>
        </authorList>
    </citation>
    <scope>FUNCTION</scope>
    <scope>CATALYTIC ACTIVITY</scope>
    <scope>MUTAGENESIS OF ASP-128 AND LYS-134</scope>
    <scope>PATHWAY</scope>
    <source>
        <strain>Manfredo</strain>
    </source>
</reference>